<evidence type="ECO:0000255" key="1">
    <source>
        <dbReference type="HAMAP-Rule" id="MF_00577"/>
    </source>
</evidence>
<gene>
    <name evidence="1" type="primary">hutU</name>
    <name type="ordered locus">YPTB3852</name>
</gene>
<keyword id="KW-0963">Cytoplasm</keyword>
<keyword id="KW-0369">Histidine metabolism</keyword>
<keyword id="KW-0456">Lyase</keyword>
<keyword id="KW-0520">NAD</keyword>
<dbReference type="EC" id="4.2.1.49" evidence="1"/>
<dbReference type="EMBL" id="BX936398">
    <property type="protein sequence ID" value="CAH23090.1"/>
    <property type="molecule type" value="Genomic_DNA"/>
</dbReference>
<dbReference type="RefSeq" id="WP_002209576.1">
    <property type="nucleotide sequence ID" value="NZ_CP009712.1"/>
</dbReference>
<dbReference type="SMR" id="Q664B7"/>
<dbReference type="GeneID" id="57974694"/>
<dbReference type="KEGG" id="ypo:BZ17_2729"/>
<dbReference type="KEGG" id="yps:YPTB3852"/>
<dbReference type="PATRIC" id="fig|273123.14.peg.2861"/>
<dbReference type="UniPathway" id="UPA00379">
    <property type="reaction ID" value="UER00550"/>
</dbReference>
<dbReference type="Proteomes" id="UP000001011">
    <property type="component" value="Chromosome"/>
</dbReference>
<dbReference type="GO" id="GO:0005737">
    <property type="term" value="C:cytoplasm"/>
    <property type="evidence" value="ECO:0007669"/>
    <property type="project" value="UniProtKB-SubCell"/>
</dbReference>
<dbReference type="GO" id="GO:0016153">
    <property type="term" value="F:urocanate hydratase activity"/>
    <property type="evidence" value="ECO:0007669"/>
    <property type="project" value="UniProtKB-UniRule"/>
</dbReference>
<dbReference type="GO" id="GO:0019556">
    <property type="term" value="P:L-histidine catabolic process to glutamate and formamide"/>
    <property type="evidence" value="ECO:0007669"/>
    <property type="project" value="UniProtKB-UniPathway"/>
</dbReference>
<dbReference type="GO" id="GO:0019557">
    <property type="term" value="P:L-histidine catabolic process to glutamate and formate"/>
    <property type="evidence" value="ECO:0007669"/>
    <property type="project" value="UniProtKB-UniPathway"/>
</dbReference>
<dbReference type="FunFam" id="3.40.50.10730:FF:000001">
    <property type="entry name" value="Urocanate hydratase"/>
    <property type="match status" value="1"/>
</dbReference>
<dbReference type="Gene3D" id="3.40.50.10730">
    <property type="entry name" value="Urocanase like domains"/>
    <property type="match status" value="1"/>
</dbReference>
<dbReference type="Gene3D" id="3.40.1770.10">
    <property type="entry name" value="Urocanase superfamily"/>
    <property type="match status" value="1"/>
</dbReference>
<dbReference type="HAMAP" id="MF_00577">
    <property type="entry name" value="HutU"/>
    <property type="match status" value="1"/>
</dbReference>
<dbReference type="InterPro" id="IPR055351">
    <property type="entry name" value="Urocanase"/>
</dbReference>
<dbReference type="InterPro" id="IPR023637">
    <property type="entry name" value="Urocanase-like"/>
</dbReference>
<dbReference type="InterPro" id="IPR035401">
    <property type="entry name" value="Urocanase_C"/>
</dbReference>
<dbReference type="InterPro" id="IPR038364">
    <property type="entry name" value="Urocanase_central_sf"/>
</dbReference>
<dbReference type="InterPro" id="IPR023636">
    <property type="entry name" value="Urocanase_CS"/>
</dbReference>
<dbReference type="InterPro" id="IPR035400">
    <property type="entry name" value="Urocanase_N"/>
</dbReference>
<dbReference type="InterPro" id="IPR035085">
    <property type="entry name" value="Urocanase_Rossmann-like"/>
</dbReference>
<dbReference type="InterPro" id="IPR036190">
    <property type="entry name" value="Urocanase_sf"/>
</dbReference>
<dbReference type="NCBIfam" id="TIGR01228">
    <property type="entry name" value="hutU"/>
    <property type="match status" value="1"/>
</dbReference>
<dbReference type="NCBIfam" id="NF003820">
    <property type="entry name" value="PRK05414.1"/>
    <property type="match status" value="1"/>
</dbReference>
<dbReference type="PANTHER" id="PTHR12216">
    <property type="entry name" value="UROCANATE HYDRATASE"/>
    <property type="match status" value="1"/>
</dbReference>
<dbReference type="PANTHER" id="PTHR12216:SF4">
    <property type="entry name" value="UROCANATE HYDRATASE"/>
    <property type="match status" value="1"/>
</dbReference>
<dbReference type="Pfam" id="PF01175">
    <property type="entry name" value="Urocanase"/>
    <property type="match status" value="1"/>
</dbReference>
<dbReference type="Pfam" id="PF17392">
    <property type="entry name" value="Urocanase_C"/>
    <property type="match status" value="1"/>
</dbReference>
<dbReference type="Pfam" id="PF17391">
    <property type="entry name" value="Urocanase_N"/>
    <property type="match status" value="1"/>
</dbReference>
<dbReference type="PIRSF" id="PIRSF001423">
    <property type="entry name" value="Urocanate_hydrat"/>
    <property type="match status" value="1"/>
</dbReference>
<dbReference type="SUPFAM" id="SSF111326">
    <property type="entry name" value="Urocanase"/>
    <property type="match status" value="1"/>
</dbReference>
<dbReference type="PROSITE" id="PS01233">
    <property type="entry name" value="UROCANASE"/>
    <property type="match status" value="1"/>
</dbReference>
<sequence length="563" mass="61535">MTTQNRFRDNEIRAPQGTQLTAKSWLTEAALRMLMNNLDPDVAENPKELVVYGGIGRAARNWECYDKIVESLINLNDDETLLIQSGKPVGIFKTHSNAPRVLIANSNLVPHWANWEHFNELDAKGLAMYGQMTAGSWIYIGSQGIVQGTYETFVEAGRQHFGGSLKGRWVLTAGLGGMGGAQPLAATLAGACSLNIECQQSRIDFRLKTRYVDEQATDLDDALARIEKYTATGVAVSIALCGNAAEILPELVRRGVRPDMVTDQTSAHDPLNGYLPKGWNWEEYRQRAQHEPALVINAAKISMAEHVEAMLAFHNMGIPTFDYGNNIRQMAHDMGVIRAFDFPGFVPAYIRPLFCRGIGPFRWVALSGNPDDIYKTDAKVKALIPDDAHLHHWLDMARERIRFQGLPARICWVGLGQRAKLGLAFNEMVRSGELSAPVVIGRDHLDSGSVASPNRETEAMQDGSDAVSDWPLLNALLNTASGATWVSLHHGGGVGMGFSQHSGMVVVCDGSDEAAERIARVLHNDPATGVMRHADAGYDIAVNCAQEQGLNLPMVAATQGKKS</sequence>
<name>HUTU_YERPS</name>
<accession>Q664B7</accession>
<protein>
    <recommendedName>
        <fullName evidence="1">Urocanate hydratase</fullName>
        <shortName evidence="1">Urocanase</shortName>
        <ecNumber evidence="1">4.2.1.49</ecNumber>
    </recommendedName>
    <alternativeName>
        <fullName evidence="1">Imidazolonepropionate hydrolase</fullName>
    </alternativeName>
</protein>
<proteinExistence type="inferred from homology"/>
<organism>
    <name type="scientific">Yersinia pseudotuberculosis serotype I (strain IP32953)</name>
    <dbReference type="NCBI Taxonomy" id="273123"/>
    <lineage>
        <taxon>Bacteria</taxon>
        <taxon>Pseudomonadati</taxon>
        <taxon>Pseudomonadota</taxon>
        <taxon>Gammaproteobacteria</taxon>
        <taxon>Enterobacterales</taxon>
        <taxon>Yersiniaceae</taxon>
        <taxon>Yersinia</taxon>
    </lineage>
</organism>
<feature type="chain" id="PRO_1000025166" description="Urocanate hydratase">
    <location>
        <begin position="1"/>
        <end position="563"/>
    </location>
</feature>
<feature type="active site" evidence="1">
    <location>
        <position position="411"/>
    </location>
</feature>
<feature type="binding site" evidence="1">
    <location>
        <begin position="53"/>
        <end position="54"/>
    </location>
    <ligand>
        <name>NAD(+)</name>
        <dbReference type="ChEBI" id="CHEBI:57540"/>
    </ligand>
</feature>
<feature type="binding site" evidence="1">
    <location>
        <position position="131"/>
    </location>
    <ligand>
        <name>NAD(+)</name>
        <dbReference type="ChEBI" id="CHEBI:57540"/>
    </ligand>
</feature>
<feature type="binding site" evidence="1">
    <location>
        <begin position="177"/>
        <end position="179"/>
    </location>
    <ligand>
        <name>NAD(+)</name>
        <dbReference type="ChEBI" id="CHEBI:57540"/>
    </ligand>
</feature>
<feature type="binding site" evidence="1">
    <location>
        <position position="197"/>
    </location>
    <ligand>
        <name>NAD(+)</name>
        <dbReference type="ChEBI" id="CHEBI:57540"/>
    </ligand>
</feature>
<feature type="binding site" evidence="1">
    <location>
        <position position="202"/>
    </location>
    <ligand>
        <name>NAD(+)</name>
        <dbReference type="ChEBI" id="CHEBI:57540"/>
    </ligand>
</feature>
<feature type="binding site" evidence="1">
    <location>
        <begin position="243"/>
        <end position="244"/>
    </location>
    <ligand>
        <name>NAD(+)</name>
        <dbReference type="ChEBI" id="CHEBI:57540"/>
    </ligand>
</feature>
<feature type="binding site" evidence="1">
    <location>
        <begin position="264"/>
        <end position="268"/>
    </location>
    <ligand>
        <name>NAD(+)</name>
        <dbReference type="ChEBI" id="CHEBI:57540"/>
    </ligand>
</feature>
<feature type="binding site" evidence="1">
    <location>
        <begin position="274"/>
        <end position="275"/>
    </location>
    <ligand>
        <name>NAD(+)</name>
        <dbReference type="ChEBI" id="CHEBI:57540"/>
    </ligand>
</feature>
<feature type="binding site" evidence="1">
    <location>
        <position position="323"/>
    </location>
    <ligand>
        <name>NAD(+)</name>
        <dbReference type="ChEBI" id="CHEBI:57540"/>
    </ligand>
</feature>
<feature type="binding site" evidence="1">
    <location>
        <position position="493"/>
    </location>
    <ligand>
        <name>NAD(+)</name>
        <dbReference type="ChEBI" id="CHEBI:57540"/>
    </ligand>
</feature>
<comment type="function">
    <text evidence="1">Catalyzes the conversion of urocanate to 4-imidazolone-5-propionate.</text>
</comment>
<comment type="catalytic activity">
    <reaction evidence="1">
        <text>4-imidazolone-5-propanoate = trans-urocanate + H2O</text>
        <dbReference type="Rhea" id="RHEA:13101"/>
        <dbReference type="ChEBI" id="CHEBI:15377"/>
        <dbReference type="ChEBI" id="CHEBI:17771"/>
        <dbReference type="ChEBI" id="CHEBI:77893"/>
        <dbReference type="EC" id="4.2.1.49"/>
    </reaction>
</comment>
<comment type="cofactor">
    <cofactor evidence="1">
        <name>NAD(+)</name>
        <dbReference type="ChEBI" id="CHEBI:57540"/>
    </cofactor>
    <text evidence="1">Binds 1 NAD(+) per subunit.</text>
</comment>
<comment type="pathway">
    <text evidence="1">Amino-acid degradation; L-histidine degradation into L-glutamate; N-formimidoyl-L-glutamate from L-histidine: step 2/3.</text>
</comment>
<comment type="subcellular location">
    <subcellularLocation>
        <location evidence="1">Cytoplasm</location>
    </subcellularLocation>
</comment>
<comment type="similarity">
    <text evidence="1">Belongs to the urocanase family.</text>
</comment>
<reference key="1">
    <citation type="journal article" date="2004" name="Proc. Natl. Acad. Sci. U.S.A.">
        <title>Insights into the evolution of Yersinia pestis through whole-genome comparison with Yersinia pseudotuberculosis.</title>
        <authorList>
            <person name="Chain P.S.G."/>
            <person name="Carniel E."/>
            <person name="Larimer F.W."/>
            <person name="Lamerdin J."/>
            <person name="Stoutland P.O."/>
            <person name="Regala W.M."/>
            <person name="Georgescu A.M."/>
            <person name="Vergez L.M."/>
            <person name="Land M.L."/>
            <person name="Motin V.L."/>
            <person name="Brubaker R.R."/>
            <person name="Fowler J."/>
            <person name="Hinnebusch J."/>
            <person name="Marceau M."/>
            <person name="Medigue C."/>
            <person name="Simonet M."/>
            <person name="Chenal-Francisque V."/>
            <person name="Souza B."/>
            <person name="Dacheux D."/>
            <person name="Elliott J.M."/>
            <person name="Derbise A."/>
            <person name="Hauser L.J."/>
            <person name="Garcia E."/>
        </authorList>
    </citation>
    <scope>NUCLEOTIDE SEQUENCE [LARGE SCALE GENOMIC DNA]</scope>
    <source>
        <strain>IP32953</strain>
    </source>
</reference>